<protein>
    <recommendedName>
        <fullName evidence="4">Protein FAM98A</fullName>
    </recommendedName>
</protein>
<evidence type="ECO:0000250" key="1">
    <source>
        <dbReference type="UniProtKB" id="Q3TJZ6"/>
    </source>
</evidence>
<evidence type="ECO:0000256" key="2">
    <source>
        <dbReference type="SAM" id="MobiDB-lite"/>
    </source>
</evidence>
<evidence type="ECO:0000269" key="3">
    <source>
    </source>
</evidence>
<evidence type="ECO:0000305" key="4"/>
<evidence type="ECO:0000312" key="5">
    <source>
        <dbReference type="HGNC" id="HGNC:24520"/>
    </source>
</evidence>
<reference key="1">
    <citation type="journal article" date="2004" name="Nat. Genet.">
        <title>Complete sequencing and characterization of 21,243 full-length human cDNAs.</title>
        <authorList>
            <person name="Ota T."/>
            <person name="Suzuki Y."/>
            <person name="Nishikawa T."/>
            <person name="Otsuki T."/>
            <person name="Sugiyama T."/>
            <person name="Irie R."/>
            <person name="Wakamatsu A."/>
            <person name="Hayashi K."/>
            <person name="Sato H."/>
            <person name="Nagai K."/>
            <person name="Kimura K."/>
            <person name="Makita H."/>
            <person name="Sekine M."/>
            <person name="Obayashi M."/>
            <person name="Nishi T."/>
            <person name="Shibahara T."/>
            <person name="Tanaka T."/>
            <person name="Ishii S."/>
            <person name="Yamamoto J."/>
            <person name="Saito K."/>
            <person name="Kawai Y."/>
            <person name="Isono Y."/>
            <person name="Nakamura Y."/>
            <person name="Nagahari K."/>
            <person name="Murakami K."/>
            <person name="Yasuda T."/>
            <person name="Iwayanagi T."/>
            <person name="Wagatsuma M."/>
            <person name="Shiratori A."/>
            <person name="Sudo H."/>
            <person name="Hosoiri T."/>
            <person name="Kaku Y."/>
            <person name="Kodaira H."/>
            <person name="Kondo H."/>
            <person name="Sugawara M."/>
            <person name="Takahashi M."/>
            <person name="Kanda K."/>
            <person name="Yokoi T."/>
            <person name="Furuya T."/>
            <person name="Kikkawa E."/>
            <person name="Omura Y."/>
            <person name="Abe K."/>
            <person name="Kamihara K."/>
            <person name="Katsuta N."/>
            <person name="Sato K."/>
            <person name="Tanikawa M."/>
            <person name="Yamazaki M."/>
            <person name="Ninomiya K."/>
            <person name="Ishibashi T."/>
            <person name="Yamashita H."/>
            <person name="Murakawa K."/>
            <person name="Fujimori K."/>
            <person name="Tanai H."/>
            <person name="Kimata M."/>
            <person name="Watanabe M."/>
            <person name="Hiraoka S."/>
            <person name="Chiba Y."/>
            <person name="Ishida S."/>
            <person name="Ono Y."/>
            <person name="Takiguchi S."/>
            <person name="Watanabe S."/>
            <person name="Yosida M."/>
            <person name="Hotuta T."/>
            <person name="Kusano J."/>
            <person name="Kanehori K."/>
            <person name="Takahashi-Fujii A."/>
            <person name="Hara H."/>
            <person name="Tanase T.-O."/>
            <person name="Nomura Y."/>
            <person name="Togiya S."/>
            <person name="Komai F."/>
            <person name="Hara R."/>
            <person name="Takeuchi K."/>
            <person name="Arita M."/>
            <person name="Imose N."/>
            <person name="Musashino K."/>
            <person name="Yuuki H."/>
            <person name="Oshima A."/>
            <person name="Sasaki N."/>
            <person name="Aotsuka S."/>
            <person name="Yoshikawa Y."/>
            <person name="Matsunawa H."/>
            <person name="Ichihara T."/>
            <person name="Shiohata N."/>
            <person name="Sano S."/>
            <person name="Moriya S."/>
            <person name="Momiyama H."/>
            <person name="Satoh N."/>
            <person name="Takami S."/>
            <person name="Terashima Y."/>
            <person name="Suzuki O."/>
            <person name="Nakagawa S."/>
            <person name="Senoh A."/>
            <person name="Mizoguchi H."/>
            <person name="Goto Y."/>
            <person name="Shimizu F."/>
            <person name="Wakebe H."/>
            <person name="Hishigaki H."/>
            <person name="Watanabe T."/>
            <person name="Sugiyama A."/>
            <person name="Takemoto M."/>
            <person name="Kawakami B."/>
            <person name="Yamazaki M."/>
            <person name="Watanabe K."/>
            <person name="Kumagai A."/>
            <person name="Itakura S."/>
            <person name="Fukuzumi Y."/>
            <person name="Fujimori Y."/>
            <person name="Komiyama M."/>
            <person name="Tashiro H."/>
            <person name="Tanigami A."/>
            <person name="Fujiwara T."/>
            <person name="Ono T."/>
            <person name="Yamada K."/>
            <person name="Fujii Y."/>
            <person name="Ozaki K."/>
            <person name="Hirao M."/>
            <person name="Ohmori Y."/>
            <person name="Kawabata A."/>
            <person name="Hikiji T."/>
            <person name="Kobatake N."/>
            <person name="Inagaki H."/>
            <person name="Ikema Y."/>
            <person name="Okamoto S."/>
            <person name="Okitani R."/>
            <person name="Kawakami T."/>
            <person name="Noguchi S."/>
            <person name="Itoh T."/>
            <person name="Shigeta K."/>
            <person name="Senba T."/>
            <person name="Matsumura K."/>
            <person name="Nakajima Y."/>
            <person name="Mizuno T."/>
            <person name="Morinaga M."/>
            <person name="Sasaki M."/>
            <person name="Togashi T."/>
            <person name="Oyama M."/>
            <person name="Hata H."/>
            <person name="Watanabe M."/>
            <person name="Komatsu T."/>
            <person name="Mizushima-Sugano J."/>
            <person name="Satoh T."/>
            <person name="Shirai Y."/>
            <person name="Takahashi Y."/>
            <person name="Nakagawa K."/>
            <person name="Okumura K."/>
            <person name="Nagase T."/>
            <person name="Nomura N."/>
            <person name="Kikuchi H."/>
            <person name="Masuho Y."/>
            <person name="Yamashita R."/>
            <person name="Nakai K."/>
            <person name="Yada T."/>
            <person name="Nakamura Y."/>
            <person name="Ohara O."/>
            <person name="Isogai T."/>
            <person name="Sugano S."/>
        </authorList>
    </citation>
    <scope>NUCLEOTIDE SEQUENCE [LARGE SCALE MRNA]</scope>
</reference>
<reference key="2">
    <citation type="journal article" date="2005" name="Nature">
        <title>Generation and annotation of the DNA sequences of human chromosomes 2 and 4.</title>
        <authorList>
            <person name="Hillier L.W."/>
            <person name="Graves T.A."/>
            <person name="Fulton R.S."/>
            <person name="Fulton L.A."/>
            <person name="Pepin K.H."/>
            <person name="Minx P."/>
            <person name="Wagner-McPherson C."/>
            <person name="Layman D."/>
            <person name="Wylie K."/>
            <person name="Sekhon M."/>
            <person name="Becker M.C."/>
            <person name="Fewell G.A."/>
            <person name="Delehaunty K.D."/>
            <person name="Miner T.L."/>
            <person name="Nash W.E."/>
            <person name="Kremitzki C."/>
            <person name="Oddy L."/>
            <person name="Du H."/>
            <person name="Sun H."/>
            <person name="Bradshaw-Cordum H."/>
            <person name="Ali J."/>
            <person name="Carter J."/>
            <person name="Cordes M."/>
            <person name="Harris A."/>
            <person name="Isak A."/>
            <person name="van Brunt A."/>
            <person name="Nguyen C."/>
            <person name="Du F."/>
            <person name="Courtney L."/>
            <person name="Kalicki J."/>
            <person name="Ozersky P."/>
            <person name="Abbott S."/>
            <person name="Armstrong J."/>
            <person name="Belter E.A."/>
            <person name="Caruso L."/>
            <person name="Cedroni M."/>
            <person name="Cotton M."/>
            <person name="Davidson T."/>
            <person name="Desai A."/>
            <person name="Elliott G."/>
            <person name="Erb T."/>
            <person name="Fronick C."/>
            <person name="Gaige T."/>
            <person name="Haakenson W."/>
            <person name="Haglund K."/>
            <person name="Holmes A."/>
            <person name="Harkins R."/>
            <person name="Kim K."/>
            <person name="Kruchowski S.S."/>
            <person name="Strong C.M."/>
            <person name="Grewal N."/>
            <person name="Goyea E."/>
            <person name="Hou S."/>
            <person name="Levy A."/>
            <person name="Martinka S."/>
            <person name="Mead K."/>
            <person name="McLellan M.D."/>
            <person name="Meyer R."/>
            <person name="Randall-Maher J."/>
            <person name="Tomlinson C."/>
            <person name="Dauphin-Kohlberg S."/>
            <person name="Kozlowicz-Reilly A."/>
            <person name="Shah N."/>
            <person name="Swearengen-Shahid S."/>
            <person name="Snider J."/>
            <person name="Strong J.T."/>
            <person name="Thompson J."/>
            <person name="Yoakum M."/>
            <person name="Leonard S."/>
            <person name="Pearman C."/>
            <person name="Trani L."/>
            <person name="Radionenko M."/>
            <person name="Waligorski J.E."/>
            <person name="Wang C."/>
            <person name="Rock S.M."/>
            <person name="Tin-Wollam A.-M."/>
            <person name="Maupin R."/>
            <person name="Latreille P."/>
            <person name="Wendl M.C."/>
            <person name="Yang S.-P."/>
            <person name="Pohl C."/>
            <person name="Wallis J.W."/>
            <person name="Spieth J."/>
            <person name="Bieri T.A."/>
            <person name="Berkowicz N."/>
            <person name="Nelson J.O."/>
            <person name="Osborne J."/>
            <person name="Ding L."/>
            <person name="Meyer R."/>
            <person name="Sabo A."/>
            <person name="Shotland Y."/>
            <person name="Sinha P."/>
            <person name="Wohldmann P.E."/>
            <person name="Cook L.L."/>
            <person name="Hickenbotham M.T."/>
            <person name="Eldred J."/>
            <person name="Williams D."/>
            <person name="Jones T.A."/>
            <person name="She X."/>
            <person name="Ciccarelli F.D."/>
            <person name="Izaurralde E."/>
            <person name="Taylor J."/>
            <person name="Schmutz J."/>
            <person name="Myers R.M."/>
            <person name="Cox D.R."/>
            <person name="Huang X."/>
            <person name="McPherson J.D."/>
            <person name="Mardis E.R."/>
            <person name="Clifton S.W."/>
            <person name="Warren W.C."/>
            <person name="Chinwalla A.T."/>
            <person name="Eddy S.R."/>
            <person name="Marra M.A."/>
            <person name="Ovcharenko I."/>
            <person name="Furey T.S."/>
            <person name="Miller W."/>
            <person name="Eichler E.E."/>
            <person name="Bork P."/>
            <person name="Suyama M."/>
            <person name="Torrents D."/>
            <person name="Waterston R.H."/>
            <person name="Wilson R.K."/>
        </authorList>
    </citation>
    <scope>NUCLEOTIDE SEQUENCE [LARGE SCALE GENOMIC DNA]</scope>
</reference>
<reference key="3">
    <citation type="submission" date="2005-09" db="EMBL/GenBank/DDBJ databases">
        <authorList>
            <person name="Mural R.J."/>
            <person name="Istrail S."/>
            <person name="Sutton G.G."/>
            <person name="Florea L."/>
            <person name="Halpern A.L."/>
            <person name="Mobarry C.M."/>
            <person name="Lippert R."/>
            <person name="Walenz B."/>
            <person name="Shatkay H."/>
            <person name="Dew I."/>
            <person name="Miller J.R."/>
            <person name="Flanigan M.J."/>
            <person name="Edwards N.J."/>
            <person name="Bolanos R."/>
            <person name="Fasulo D."/>
            <person name="Halldorsson B.V."/>
            <person name="Hannenhalli S."/>
            <person name="Turner R."/>
            <person name="Yooseph S."/>
            <person name="Lu F."/>
            <person name="Nusskern D.R."/>
            <person name="Shue B.C."/>
            <person name="Zheng X.H."/>
            <person name="Zhong F."/>
            <person name="Delcher A.L."/>
            <person name="Huson D.H."/>
            <person name="Kravitz S.A."/>
            <person name="Mouchard L."/>
            <person name="Reinert K."/>
            <person name="Remington K.A."/>
            <person name="Clark A.G."/>
            <person name="Waterman M.S."/>
            <person name="Eichler E.E."/>
            <person name="Adams M.D."/>
            <person name="Hunkapiller M.W."/>
            <person name="Myers E.W."/>
            <person name="Venter J.C."/>
        </authorList>
    </citation>
    <scope>NUCLEOTIDE SEQUENCE [LARGE SCALE GENOMIC DNA]</scope>
</reference>
<reference key="4">
    <citation type="journal article" date="2004" name="Genome Res.">
        <title>The status, quality, and expansion of the NIH full-length cDNA project: the Mammalian Gene Collection (MGC).</title>
        <authorList>
            <consortium name="The MGC Project Team"/>
        </authorList>
    </citation>
    <scope>NUCLEOTIDE SEQUENCE [LARGE SCALE MRNA]</scope>
    <source>
        <tissue>Brain</tissue>
    </source>
</reference>
<reference key="5">
    <citation type="journal article" date="2007" name="BMC Genomics">
        <title>The full-ORF clone resource of the German cDNA consortium.</title>
        <authorList>
            <person name="Bechtel S."/>
            <person name="Rosenfelder H."/>
            <person name="Duda A."/>
            <person name="Schmidt C.P."/>
            <person name="Ernst U."/>
            <person name="Wellenreuther R."/>
            <person name="Mehrle A."/>
            <person name="Schuster C."/>
            <person name="Bahr A."/>
            <person name="Bloecker H."/>
            <person name="Heubner D."/>
            <person name="Hoerlein A."/>
            <person name="Michel G."/>
            <person name="Wedler H."/>
            <person name="Koehrer K."/>
            <person name="Ottenwaelder B."/>
            <person name="Poustka A."/>
            <person name="Wiemann S."/>
            <person name="Schupp I."/>
        </authorList>
    </citation>
    <scope>NUCLEOTIDE SEQUENCE [LARGE SCALE MRNA] OF 206-518</scope>
    <source>
        <tissue>Brain</tissue>
    </source>
</reference>
<reference key="6">
    <citation type="journal article" date="2011" name="BMC Syst. Biol.">
        <title>Initial characterization of the human central proteome.</title>
        <authorList>
            <person name="Burkard T.R."/>
            <person name="Planyavsky M."/>
            <person name="Kaupe I."/>
            <person name="Breitwieser F.P."/>
            <person name="Buerckstuemmer T."/>
            <person name="Bennett K.L."/>
            <person name="Superti-Furga G."/>
            <person name="Colinge J."/>
        </authorList>
    </citation>
    <scope>IDENTIFICATION BY MASS SPECTROMETRY [LARGE SCALE ANALYSIS]</scope>
</reference>
<reference key="7">
    <citation type="journal article" date="2014" name="J. Proteomics">
        <title>An enzyme assisted RP-RPLC approach for in-depth analysis of human liver phosphoproteome.</title>
        <authorList>
            <person name="Bian Y."/>
            <person name="Song C."/>
            <person name="Cheng K."/>
            <person name="Dong M."/>
            <person name="Wang F."/>
            <person name="Huang J."/>
            <person name="Sun D."/>
            <person name="Wang L."/>
            <person name="Ye M."/>
            <person name="Zou H."/>
        </authorList>
    </citation>
    <scope>IDENTIFICATION BY MASS SPECTROMETRY [LARGE SCALE ANALYSIS]</scope>
    <source>
        <tissue>Liver</tissue>
    </source>
</reference>
<reference key="8">
    <citation type="journal article" date="2017" name="Int. J. Biochem. Cell Biol.">
        <title>FAM98A associates with DDX1-C14orf166-FAM98B in a novel complex involved in colorectal cancer progression.</title>
        <authorList>
            <person name="Akter K.A."/>
            <person name="Mansour M.A."/>
            <person name="Hyodo T."/>
            <person name="Senga T."/>
        </authorList>
    </citation>
    <scope>FUNCTION</scope>
    <scope>INTERACTION WITH C14ORF166; DDX1 AND FAM98B</scope>
    <scope>TISSUE SPECIFICITY</scope>
</reference>
<dbReference type="EMBL" id="AK074867">
    <property type="protein sequence ID" value="BAC11255.1"/>
    <property type="molecule type" value="mRNA"/>
</dbReference>
<dbReference type="EMBL" id="AC017050">
    <property type="status" value="NOT_ANNOTATED_CDS"/>
    <property type="molecule type" value="Genomic_DNA"/>
</dbReference>
<dbReference type="EMBL" id="CH471053">
    <property type="protein sequence ID" value="EAX00431.1"/>
    <property type="molecule type" value="Genomic_DNA"/>
</dbReference>
<dbReference type="EMBL" id="BC136768">
    <property type="protein sequence ID" value="AAI36769.1"/>
    <property type="molecule type" value="mRNA"/>
</dbReference>
<dbReference type="EMBL" id="BC136770">
    <property type="protein sequence ID" value="AAI36771.1"/>
    <property type="molecule type" value="mRNA"/>
</dbReference>
<dbReference type="EMBL" id="AL049943">
    <property type="protein sequence ID" value="CAB43217.2"/>
    <property type="molecule type" value="mRNA"/>
</dbReference>
<dbReference type="CCDS" id="CCDS33179.1"/>
<dbReference type="PIR" id="T08675">
    <property type="entry name" value="T08675"/>
</dbReference>
<dbReference type="RefSeq" id="NP_056290.3">
    <property type="nucleotide sequence ID" value="NM_015475.4"/>
</dbReference>
<dbReference type="BioGRID" id="117437">
    <property type="interactions" value="251"/>
</dbReference>
<dbReference type="ComplexPortal" id="CPX-6411">
    <property type="entry name" value="tRNA-splicing ligase complex"/>
</dbReference>
<dbReference type="FunCoup" id="Q8NCA5">
    <property type="interactions" value="2262"/>
</dbReference>
<dbReference type="IntAct" id="Q8NCA5">
    <property type="interactions" value="77"/>
</dbReference>
<dbReference type="MINT" id="Q8NCA5"/>
<dbReference type="STRING" id="9606.ENSP00000238823"/>
<dbReference type="GlyGen" id="Q8NCA5">
    <property type="glycosylation" value="1 site, 1 O-linked glycan (1 site)"/>
</dbReference>
<dbReference type="iPTMnet" id="Q8NCA5"/>
<dbReference type="MetOSite" id="Q8NCA5"/>
<dbReference type="PhosphoSitePlus" id="Q8NCA5"/>
<dbReference type="SwissPalm" id="Q8NCA5"/>
<dbReference type="BioMuta" id="FAM98A"/>
<dbReference type="DMDM" id="74715180"/>
<dbReference type="jPOST" id="Q8NCA5"/>
<dbReference type="MassIVE" id="Q8NCA5"/>
<dbReference type="PaxDb" id="9606-ENSP00000238823"/>
<dbReference type="PeptideAtlas" id="Q8NCA5"/>
<dbReference type="Pumba" id="Q8NCA5"/>
<dbReference type="Antibodypedia" id="29272">
    <property type="antibodies" value="108 antibodies from 19 providers"/>
</dbReference>
<dbReference type="DNASU" id="25940"/>
<dbReference type="Ensembl" id="ENST00000238823.13">
    <property type="protein sequence ID" value="ENSP00000238823.8"/>
    <property type="gene ID" value="ENSG00000119812.20"/>
</dbReference>
<dbReference type="GeneID" id="25940"/>
<dbReference type="KEGG" id="hsa:25940"/>
<dbReference type="MANE-Select" id="ENST00000238823.13">
    <property type="protein sequence ID" value="ENSP00000238823.8"/>
    <property type="RefSeq nucleotide sequence ID" value="NM_015475.5"/>
    <property type="RefSeq protein sequence ID" value="NP_056290.3"/>
</dbReference>
<dbReference type="UCSC" id="uc002rpa.2">
    <property type="organism name" value="human"/>
</dbReference>
<dbReference type="AGR" id="HGNC:24520"/>
<dbReference type="CTD" id="25940"/>
<dbReference type="DisGeNET" id="25940"/>
<dbReference type="GeneCards" id="FAM98A"/>
<dbReference type="HGNC" id="HGNC:24520">
    <property type="gene designation" value="FAM98A"/>
</dbReference>
<dbReference type="HPA" id="ENSG00000119812">
    <property type="expression patterns" value="Low tissue specificity"/>
</dbReference>
<dbReference type="MIM" id="620904">
    <property type="type" value="gene"/>
</dbReference>
<dbReference type="neXtProt" id="NX_Q8NCA5"/>
<dbReference type="OpenTargets" id="ENSG00000119812"/>
<dbReference type="PharmGKB" id="PA142671777"/>
<dbReference type="VEuPathDB" id="HostDB:ENSG00000119812"/>
<dbReference type="eggNOG" id="KOG3973">
    <property type="taxonomic scope" value="Eukaryota"/>
</dbReference>
<dbReference type="GeneTree" id="ENSGT00440000037341"/>
<dbReference type="HOGENOM" id="CLU_038408_1_2_1"/>
<dbReference type="InParanoid" id="Q8NCA5"/>
<dbReference type="OMA" id="TEKQWFA"/>
<dbReference type="OrthoDB" id="512356at2759"/>
<dbReference type="PAN-GO" id="Q8NCA5">
    <property type="GO annotations" value="1 GO annotation based on evolutionary models"/>
</dbReference>
<dbReference type="PhylomeDB" id="Q8NCA5"/>
<dbReference type="TreeFam" id="TF320308"/>
<dbReference type="PathwayCommons" id="Q8NCA5"/>
<dbReference type="SignaLink" id="Q8NCA5"/>
<dbReference type="BioGRID-ORCS" id="25940">
    <property type="hits" value="19 hits in 1163 CRISPR screens"/>
</dbReference>
<dbReference type="CD-CODE" id="1A18FFC4">
    <property type="entry name" value="Paraspeckle"/>
</dbReference>
<dbReference type="CD-CODE" id="232F8A39">
    <property type="entry name" value="P-body"/>
</dbReference>
<dbReference type="CD-CODE" id="DEE660B4">
    <property type="entry name" value="Stress granule"/>
</dbReference>
<dbReference type="ChiTaRS" id="FAM98A">
    <property type="organism name" value="human"/>
</dbReference>
<dbReference type="GenomeRNAi" id="25940"/>
<dbReference type="Pharos" id="Q8NCA5">
    <property type="development level" value="Tbio"/>
</dbReference>
<dbReference type="PRO" id="PR:Q8NCA5"/>
<dbReference type="Proteomes" id="UP000005640">
    <property type="component" value="Chromosome 2"/>
</dbReference>
<dbReference type="RNAct" id="Q8NCA5">
    <property type="molecule type" value="protein"/>
</dbReference>
<dbReference type="Bgee" id="ENSG00000119812">
    <property type="expression patterns" value="Expressed in tibia and 215 other cell types or tissues"/>
</dbReference>
<dbReference type="ExpressionAtlas" id="Q8NCA5">
    <property type="expression patterns" value="baseline and differential"/>
</dbReference>
<dbReference type="GO" id="GO:0005737">
    <property type="term" value="C:cytoplasm"/>
    <property type="evidence" value="ECO:0000303"/>
    <property type="project" value="ComplexPortal"/>
</dbReference>
<dbReference type="GO" id="GO:0005634">
    <property type="term" value="C:nucleus"/>
    <property type="evidence" value="ECO:0000303"/>
    <property type="project" value="ComplexPortal"/>
</dbReference>
<dbReference type="GO" id="GO:0072669">
    <property type="term" value="C:tRNA-splicing ligase complex"/>
    <property type="evidence" value="ECO:0000318"/>
    <property type="project" value="GO_Central"/>
</dbReference>
<dbReference type="GO" id="GO:0008276">
    <property type="term" value="F:protein methyltransferase activity"/>
    <property type="evidence" value="ECO:0000315"/>
    <property type="project" value="UniProtKB"/>
</dbReference>
<dbReference type="GO" id="GO:0003723">
    <property type="term" value="F:RNA binding"/>
    <property type="evidence" value="ECO:0007005"/>
    <property type="project" value="UniProtKB"/>
</dbReference>
<dbReference type="GO" id="GO:0032418">
    <property type="term" value="P:lysosome localization"/>
    <property type="evidence" value="ECO:0000250"/>
    <property type="project" value="UniProtKB"/>
</dbReference>
<dbReference type="GO" id="GO:0008284">
    <property type="term" value="P:positive regulation of cell population proliferation"/>
    <property type="evidence" value="ECO:0000315"/>
    <property type="project" value="UniProtKB"/>
</dbReference>
<dbReference type="GO" id="GO:0010628">
    <property type="term" value="P:positive regulation of gene expression"/>
    <property type="evidence" value="ECO:0000315"/>
    <property type="project" value="UniProtKB"/>
</dbReference>
<dbReference type="GO" id="GO:1900029">
    <property type="term" value="P:positive regulation of ruffle assembly"/>
    <property type="evidence" value="ECO:0000250"/>
    <property type="project" value="UniProtKB"/>
</dbReference>
<dbReference type="GO" id="GO:0006479">
    <property type="term" value="P:protein methylation"/>
    <property type="evidence" value="ECO:0000315"/>
    <property type="project" value="UniProtKB"/>
</dbReference>
<dbReference type="GO" id="GO:0006388">
    <property type="term" value="P:tRNA splicing, via endonucleolytic cleavage and ligation"/>
    <property type="evidence" value="ECO:0000303"/>
    <property type="project" value="ComplexPortal"/>
</dbReference>
<dbReference type="InterPro" id="IPR018797">
    <property type="entry name" value="FAM98"/>
</dbReference>
<dbReference type="PANTHER" id="PTHR31353">
    <property type="entry name" value="FAM98"/>
    <property type="match status" value="1"/>
</dbReference>
<dbReference type="PANTHER" id="PTHR31353:SF9">
    <property type="entry name" value="PROTEIN FAM98A"/>
    <property type="match status" value="1"/>
</dbReference>
<dbReference type="Pfam" id="PF10239">
    <property type="entry name" value="DUF2465"/>
    <property type="match status" value="1"/>
</dbReference>
<accession>Q8NCA5</accession>
<accession>B2RNA2</accession>
<accession>Q9Y3Y6</accession>
<feature type="chain" id="PRO_0000187184" description="Protein FAM98A">
    <location>
        <begin position="1"/>
        <end position="518"/>
    </location>
</feature>
<feature type="region of interest" description="Disordered" evidence="2">
    <location>
        <begin position="297"/>
        <end position="415"/>
    </location>
</feature>
<feature type="region of interest" description="Disordered" evidence="2">
    <location>
        <begin position="434"/>
        <end position="518"/>
    </location>
</feature>
<feature type="compositionally biased region" description="Basic and acidic residues" evidence="2">
    <location>
        <begin position="302"/>
        <end position="311"/>
    </location>
</feature>
<feature type="compositionally biased region" description="Gly residues" evidence="2">
    <location>
        <begin position="349"/>
        <end position="364"/>
    </location>
</feature>
<feature type="compositionally biased region" description="Gly residues" evidence="2">
    <location>
        <begin position="383"/>
        <end position="396"/>
    </location>
</feature>
<feature type="compositionally biased region" description="Gly residues" evidence="2">
    <location>
        <begin position="405"/>
        <end position="415"/>
    </location>
</feature>
<feature type="compositionally biased region" description="Basic and acidic residues" evidence="2">
    <location>
        <begin position="447"/>
        <end position="459"/>
    </location>
</feature>
<feature type="compositionally biased region" description="Gly residues" evidence="2">
    <location>
        <begin position="460"/>
        <end position="484"/>
    </location>
</feature>
<feature type="compositionally biased region" description="Low complexity" evidence="2">
    <location>
        <begin position="488"/>
        <end position="504"/>
    </location>
</feature>
<feature type="compositionally biased region" description="Polar residues" evidence="2">
    <location>
        <begin position="505"/>
        <end position="518"/>
    </location>
</feature>
<feature type="sequence conflict" description="In Ref. 1; BAC11255." evidence="4" ref="1">
    <original>K</original>
    <variation>KK</variation>
    <location>
        <position position="174"/>
    </location>
</feature>
<feature type="sequence conflict" description="In Ref. 5; CAB43217." evidence="4" ref="5">
    <original>G</original>
    <variation>V</variation>
    <location>
        <position position="337"/>
    </location>
</feature>
<gene>
    <name evidence="5" type="primary">FAM98A</name>
</gene>
<comment type="function">
    <text evidence="1 3">Positively stimulates PRMT1-induced protein arginine methylation (PubMed:28040436). Involved in skeletal homeostasis (By similarity). Positively regulates lysosome peripheral distribution and ruffled border formation in osteoclasts (By similarity).</text>
</comment>
<comment type="subunit">
    <text evidence="1 3">Interacts (via N- and C-terminus) with DDX1 (PubMed:28040436). Interacts (via N- and C-terminus) with C14orf166 (PubMed:28040436). Interacts with FAM98B (PubMed:28040436). Interacts with PLEKHM1 (via N- and C-terminus) (By similarity).</text>
</comment>
<comment type="interaction">
    <interactant intactId="EBI-1210765">
        <id>Q8NCA5</id>
    </interactant>
    <interactant intactId="EBI-358474">
        <id>Q92499</id>
        <label>DDX1</label>
    </interactant>
    <organismsDiffer>false</organismsDiffer>
    <experiments>6</experiments>
</comment>
<comment type="interaction">
    <interactant intactId="EBI-1210765">
        <id>Q8NCA5</id>
    </interactant>
    <interactant intactId="EBI-1104547">
        <id>Q9Y224</id>
        <label>RTRAF</label>
    </interactant>
    <organismsDiffer>false</organismsDiffer>
    <experiments>7</experiments>
</comment>
<comment type="tissue specificity">
    <text evidence="3">Expressed strongly in colorectal cancer cells (PubMed:28040436). Expressed strongly in colorectal cancer tissues compared to wild-type colon samples (at protein level) (PubMed:28040436). Expressed strongly in colorectal cancer tissues compared to wild-type colon samples (PubMed:28040436).</text>
</comment>
<comment type="similarity">
    <text evidence="4">Belongs to the FAM98 family.</text>
</comment>
<organism>
    <name type="scientific">Homo sapiens</name>
    <name type="common">Human</name>
    <dbReference type="NCBI Taxonomy" id="9606"/>
    <lineage>
        <taxon>Eukaryota</taxon>
        <taxon>Metazoa</taxon>
        <taxon>Chordata</taxon>
        <taxon>Craniata</taxon>
        <taxon>Vertebrata</taxon>
        <taxon>Euteleostomi</taxon>
        <taxon>Mammalia</taxon>
        <taxon>Eutheria</taxon>
        <taxon>Euarchontoglires</taxon>
        <taxon>Primates</taxon>
        <taxon>Haplorrhini</taxon>
        <taxon>Catarrhini</taxon>
        <taxon>Hominidae</taxon>
        <taxon>Homo</taxon>
    </lineage>
</organism>
<proteinExistence type="evidence at protein level"/>
<keyword id="KW-1267">Proteomics identification</keyword>
<keyword id="KW-1185">Reference proteome</keyword>
<name>FA98A_HUMAN</name>
<sequence length="518" mass="55273">MECDLMETDILESLEDLGYKGPLLEDGALSQAVSAGASSPEFTKLCAWLVSELRVLCKLEENVQATNSPSEAEEFQLEVSGLLGEMNCPYLSLTSGDVTKRLLIQKNCLLLLTYLISELEAARMLCVNAPPKKAQEGGGSEVFQELKGICIALGMSKPPANITMFQFFSGIEKKLKETLAKVPPNHVGKPLLKKPMGPAHWEKIEAINQAIANEYEVRRKLLIKRLDVTVQSFGWSDRAKSQTEKLAKVYQPKRSVLSPKTTISVAHLLAARQDLSKILRTSSGSIREKTACAINKVLMGRVPDRGGRPNEIEPPPPEMPPWQKRQDGPQQQTGGRGGGRGGYEHSSYGGRGGHEQGGGRGGRGGYDHGGRGGGRGNKHQGGWTDGGSGGGGGYQDGGYRDSGFQPGGYHGGHSSGGYQGGGYGGFQTSSSYTGSGYQGGGYQQDNRYQDGGHHGDRGGGRGGRGGRGGRGGRAGQGGGWGGRGSQNYHQGGQFEQHFQHGGYQYNHSGFGQGRHYTS</sequence>